<name>RACD_ANABR</name>
<accession>P83989</accession>
<keyword id="KW-0903">Direct protein sequencing</keyword>
<keyword id="KW-0413">Isomerase</keyword>
<keyword id="KW-0663">Pyridoxal phosphate</keyword>
<feature type="chain" id="PRO_0000095539" description="Aspartate racemase">
    <location>
        <begin position="1"/>
        <end position="31" status="greater than"/>
    </location>
</feature>
<feature type="region of interest" description="Disordered" evidence="1">
    <location>
        <begin position="1"/>
        <end position="31"/>
    </location>
</feature>
<feature type="compositionally biased region" description="Basic and acidic residues" evidence="1">
    <location>
        <begin position="7"/>
        <end position="18"/>
    </location>
</feature>
<feature type="non-terminal residue" evidence="3">
    <location>
        <position position="31"/>
    </location>
</feature>
<comment type="function">
    <text evidence="2">Highly specific toward aspartate and entirely inactive on glutamate, alanine and serine.</text>
</comment>
<comment type="catalytic activity">
    <reaction evidence="2">
        <text>L-aspartate = D-aspartate</text>
        <dbReference type="Rhea" id="RHEA:14973"/>
        <dbReference type="ChEBI" id="CHEBI:29990"/>
        <dbReference type="ChEBI" id="CHEBI:29991"/>
        <dbReference type="EC" id="5.1.1.13"/>
    </reaction>
</comment>
<comment type="cofactor">
    <cofactor evidence="2">
        <name>pyridoxal 5'-phosphate</name>
        <dbReference type="ChEBI" id="CHEBI:597326"/>
    </cofactor>
</comment>
<comment type="activity regulation">
    <text evidence="2">Inhibited by hydroxylamine, aminooxyacetate, phenylhydrazine and sodium borohydride.</text>
</comment>
<comment type="biophysicochemical properties">
    <phDependence>
        <text>Optimum pH is 8 for both directions of the reaction.</text>
    </phDependence>
    <temperatureDependence>
        <text>Optimum temperature is 25 degrees Celsius.</text>
    </temperatureDependence>
</comment>
<comment type="similarity">
    <text evidence="4">Belongs to the aspartate/glutamate racemases family.</text>
</comment>
<protein>
    <recommendedName>
        <fullName>Aspartate racemase</fullName>
        <ecNumber>5.1.1.13</ecNumber>
    </recommendedName>
</protein>
<proteinExistence type="evidence at protein level"/>
<sequence>PVAPEYLFKKEEDKGANKEEEEVAPELGIRA</sequence>
<evidence type="ECO:0000256" key="1">
    <source>
        <dbReference type="SAM" id="MobiDB-lite"/>
    </source>
</evidence>
<evidence type="ECO:0000269" key="2">
    <source>
    </source>
</evidence>
<evidence type="ECO:0000303" key="3">
    <source>
    </source>
</evidence>
<evidence type="ECO:0000305" key="4"/>
<organism>
    <name type="scientific">Anadara broughtonii</name>
    <name type="common">Blood clam</name>
    <name type="synonym">Scapharca broughtonii</name>
    <dbReference type="NCBI Taxonomy" id="148819"/>
    <lineage>
        <taxon>Eukaryota</taxon>
        <taxon>Metazoa</taxon>
        <taxon>Spiralia</taxon>
        <taxon>Lophotrochozoa</taxon>
        <taxon>Mollusca</taxon>
        <taxon>Bivalvia</taxon>
        <taxon>Autobranchia</taxon>
        <taxon>Pteriomorphia</taxon>
        <taxon>Arcoida</taxon>
        <taxon>Arcoidea</taxon>
        <taxon>Arcidae</taxon>
        <taxon>Anadara</taxon>
    </lineage>
</organism>
<dbReference type="EC" id="5.1.1.13"/>
<dbReference type="GO" id="GO:0047689">
    <property type="term" value="F:aspartate racemase activity"/>
    <property type="evidence" value="ECO:0007669"/>
    <property type="project" value="UniProtKB-EC"/>
</dbReference>
<reference evidence="4" key="1">
    <citation type="journal article" date="2003" name="Comp. Biochem. Physiol.">
        <title>Purification and characterization of aspartate racemase from the bivalve mollusk Scapharca broughtonii.</title>
        <authorList>
            <person name="Shibata K."/>
            <person name="Watanabe T."/>
            <person name="Yoshikawa H."/>
            <person name="Abe K."/>
            <person name="Takahashi S."/>
            <person name="Kera Y."/>
            <person name="Yamada R.-H."/>
        </authorList>
    </citation>
    <scope>PROTEIN SEQUENCE</scope>
    <scope>FUNCTION</scope>
    <scope>COFACTOR</scope>
    <scope>ACTIVITY REGULATION</scope>
    <source>
        <tissue evidence="2">Foot muscle</tissue>
    </source>
</reference>